<accession>B0R701</accession>
<name>RL40_HALS3</name>
<dbReference type="EMBL" id="AM774415">
    <property type="protein sequence ID" value="CAP14520.1"/>
    <property type="molecule type" value="Genomic_DNA"/>
</dbReference>
<dbReference type="RefSeq" id="WP_010903526.1">
    <property type="nucleotide sequence ID" value="NC_010364.1"/>
</dbReference>
<dbReference type="SMR" id="B0R701"/>
<dbReference type="EnsemblBacteria" id="CAP14520">
    <property type="protein sequence ID" value="CAP14520"/>
    <property type="gene ID" value="OE_3898F"/>
</dbReference>
<dbReference type="KEGG" id="hsl:OE_3898F"/>
<dbReference type="HOGENOM" id="CLU_205640_0_0_2"/>
<dbReference type="PhylomeDB" id="B0R701"/>
<dbReference type="Proteomes" id="UP000001321">
    <property type="component" value="Chromosome"/>
</dbReference>
<dbReference type="GO" id="GO:1990904">
    <property type="term" value="C:ribonucleoprotein complex"/>
    <property type="evidence" value="ECO:0007669"/>
    <property type="project" value="UniProtKB-KW"/>
</dbReference>
<dbReference type="GO" id="GO:0005840">
    <property type="term" value="C:ribosome"/>
    <property type="evidence" value="ECO:0007669"/>
    <property type="project" value="UniProtKB-KW"/>
</dbReference>
<dbReference type="GO" id="GO:0003735">
    <property type="term" value="F:structural constituent of ribosome"/>
    <property type="evidence" value="ECO:0007669"/>
    <property type="project" value="InterPro"/>
</dbReference>
<dbReference type="GO" id="GO:0006412">
    <property type="term" value="P:translation"/>
    <property type="evidence" value="ECO:0007669"/>
    <property type="project" value="UniProtKB-UniRule"/>
</dbReference>
<dbReference type="Gene3D" id="4.10.1060.50">
    <property type="match status" value="1"/>
</dbReference>
<dbReference type="HAMAP" id="MF_00788">
    <property type="entry name" value="Ribosomal_eL40"/>
    <property type="match status" value="1"/>
</dbReference>
<dbReference type="InterPro" id="IPR023657">
    <property type="entry name" value="Ribosomal_eL40_arc"/>
</dbReference>
<dbReference type="InterPro" id="IPR001975">
    <property type="entry name" value="Ribosomal_eL40_dom"/>
</dbReference>
<dbReference type="InterPro" id="IPR038587">
    <property type="entry name" value="Ribosomal_eL40_sf"/>
</dbReference>
<dbReference type="InterPro" id="IPR011332">
    <property type="entry name" value="Ribosomal_zn-bd"/>
</dbReference>
<dbReference type="NCBIfam" id="NF003161">
    <property type="entry name" value="PRK04136.1"/>
    <property type="match status" value="1"/>
</dbReference>
<dbReference type="PANTHER" id="PTHR39649">
    <property type="entry name" value="50S RIBOSOMAL PROTEIN L40E"/>
    <property type="match status" value="1"/>
</dbReference>
<dbReference type="PANTHER" id="PTHR39649:SF1">
    <property type="entry name" value="LARGE RIBOSOMAL SUBUNIT PROTEIN EL40"/>
    <property type="match status" value="1"/>
</dbReference>
<dbReference type="Pfam" id="PF01020">
    <property type="entry name" value="Ribosomal_L40e"/>
    <property type="match status" value="1"/>
</dbReference>
<dbReference type="SMART" id="SM01377">
    <property type="entry name" value="Ribosomal_L40e"/>
    <property type="match status" value="1"/>
</dbReference>
<dbReference type="SUPFAM" id="SSF57829">
    <property type="entry name" value="Zn-binding ribosomal proteins"/>
    <property type="match status" value="1"/>
</dbReference>
<feature type="chain" id="PRO_1000133751" description="Large ribosomal subunit protein eL40">
    <location>
        <begin position="1"/>
        <end position="47"/>
    </location>
</feature>
<proteinExistence type="inferred from homology"/>
<protein>
    <recommendedName>
        <fullName evidence="1">Large ribosomal subunit protein eL40</fullName>
    </recommendedName>
    <alternativeName>
        <fullName evidence="2">50S ribosomal protein L40e</fullName>
    </alternativeName>
</protein>
<evidence type="ECO:0000255" key="1">
    <source>
        <dbReference type="HAMAP-Rule" id="MF_00788"/>
    </source>
</evidence>
<evidence type="ECO:0000305" key="2"/>
<comment type="similarity">
    <text evidence="1">Belongs to the eukaryotic ribosomal protein eL40 family.</text>
</comment>
<keyword id="KW-0687">Ribonucleoprotein</keyword>
<keyword id="KW-0689">Ribosomal protein</keyword>
<sequence length="47" mass="5435">MSETIEDRLLNKQVCMRCNARNPTDAESCRKCGYKNLRTKASERRSA</sequence>
<reference key="1">
    <citation type="journal article" date="2008" name="Genomics">
        <title>Evolution in the laboratory: the genome of Halobacterium salinarum strain R1 compared to that of strain NRC-1.</title>
        <authorList>
            <person name="Pfeiffer F."/>
            <person name="Schuster S.C."/>
            <person name="Broicher A."/>
            <person name="Falb M."/>
            <person name="Palm P."/>
            <person name="Rodewald K."/>
            <person name="Ruepp A."/>
            <person name="Soppa J."/>
            <person name="Tittor J."/>
            <person name="Oesterhelt D."/>
        </authorList>
    </citation>
    <scope>NUCLEOTIDE SEQUENCE [LARGE SCALE GENOMIC DNA]</scope>
    <source>
        <strain>ATCC 29341 / DSM 671 / R1</strain>
    </source>
</reference>
<organism>
    <name type="scientific">Halobacterium salinarum (strain ATCC 29341 / DSM 671 / R1)</name>
    <dbReference type="NCBI Taxonomy" id="478009"/>
    <lineage>
        <taxon>Archaea</taxon>
        <taxon>Methanobacteriati</taxon>
        <taxon>Methanobacteriota</taxon>
        <taxon>Stenosarchaea group</taxon>
        <taxon>Halobacteria</taxon>
        <taxon>Halobacteriales</taxon>
        <taxon>Halobacteriaceae</taxon>
        <taxon>Halobacterium</taxon>
        <taxon>Halobacterium salinarum NRC-34001</taxon>
    </lineage>
</organism>
<gene>
    <name evidence="1" type="primary">rpl40e</name>
    <name type="ordered locus">OE_3898F</name>
</gene>